<organism>
    <name type="scientific">Methanocaldococcus jannaschii (strain ATCC 43067 / DSM 2661 / JAL-1 / JCM 10045 / NBRC 100440)</name>
    <name type="common">Methanococcus jannaschii</name>
    <dbReference type="NCBI Taxonomy" id="243232"/>
    <lineage>
        <taxon>Archaea</taxon>
        <taxon>Methanobacteriati</taxon>
        <taxon>Methanobacteriota</taxon>
        <taxon>Methanomada group</taxon>
        <taxon>Methanococci</taxon>
        <taxon>Methanococcales</taxon>
        <taxon>Methanocaldococcaceae</taxon>
        <taxon>Methanocaldococcus</taxon>
    </lineage>
</organism>
<gene>
    <name type="ordered locus">MJ0954</name>
</gene>
<accession>Q58364</accession>
<keyword id="KW-1185">Reference proteome</keyword>
<keyword id="KW-0732">Signal</keyword>
<sequence length="440" mass="50745">MLRLQMMEGLIVKRTLLLILLLVISVSYALPIEPIIYVNKSTVDYQNAKILMDNFYSSREININGDNVTIVINDIMYIPSIDELEIKNGDKNLIIKFDRDGNKVKYKDIECIEYLNLKKGEEISLFNKSYIVEDITSNYVILKEKDGKEVLTNESFEYDGYKVVVKLVSSDLNTIIVDIYKNEKVLDSPKLTKGKIYYMKGGTLGLMYENCTRIGKGYRFTFRVYSTIKIEEGEDYPLDKEFKVKEISTDKIKLEYKNIDSLGNEIYLFNYTIIPEKCYKDYVLFKVIKRKEKTVDVKDVAYIGDGIYAVKVNNTVHVFYKGKELKNHEKIYLGSVDVYSSNPLNVNKDIILIGGPKVNKIVKELEDKGLLKVNISTNYPGNNRGIILKIKNPYNDNNIYILAGSDRWGTKAAILVFLTKYNDEDTLMVEWDKGEIKIIK</sequence>
<evidence type="ECO:0000255" key="1"/>
<evidence type="ECO:0000305" key="2"/>
<reference key="1">
    <citation type="journal article" date="1996" name="Science">
        <title>Complete genome sequence of the methanogenic archaeon, Methanococcus jannaschii.</title>
        <authorList>
            <person name="Bult C.J."/>
            <person name="White O."/>
            <person name="Olsen G.J."/>
            <person name="Zhou L."/>
            <person name="Fleischmann R.D."/>
            <person name="Sutton G.G."/>
            <person name="Blake J.A."/>
            <person name="FitzGerald L.M."/>
            <person name="Clayton R.A."/>
            <person name="Gocayne J.D."/>
            <person name="Kerlavage A.R."/>
            <person name="Dougherty B.A."/>
            <person name="Tomb J.-F."/>
            <person name="Adams M.D."/>
            <person name="Reich C.I."/>
            <person name="Overbeek R."/>
            <person name="Kirkness E.F."/>
            <person name="Weinstock K.G."/>
            <person name="Merrick J.M."/>
            <person name="Glodek A."/>
            <person name="Scott J.L."/>
            <person name="Geoghagen N.S.M."/>
            <person name="Weidman J.F."/>
            <person name="Fuhrmann J.L."/>
            <person name="Nguyen D."/>
            <person name="Utterback T.R."/>
            <person name="Kelley J.M."/>
            <person name="Peterson J.D."/>
            <person name="Sadow P.W."/>
            <person name="Hanna M.C."/>
            <person name="Cotton M.D."/>
            <person name="Roberts K.M."/>
            <person name="Hurst M.A."/>
            <person name="Kaine B.P."/>
            <person name="Borodovsky M."/>
            <person name="Klenk H.-P."/>
            <person name="Fraser C.M."/>
            <person name="Smith H.O."/>
            <person name="Woese C.R."/>
            <person name="Venter J.C."/>
        </authorList>
    </citation>
    <scope>NUCLEOTIDE SEQUENCE [LARGE SCALE GENOMIC DNA]</scope>
    <source>
        <strain>ATCC 43067 / DSM 2661 / JAL-1 / JCM 10045 / NBRC 100440</strain>
    </source>
</reference>
<comment type="similarity">
    <text evidence="2">Belongs to the Mj S-layer protein family.</text>
</comment>
<proteinExistence type="inferred from homology"/>
<dbReference type="EMBL" id="L77117">
    <property type="protein sequence ID" value="AAB98959.1"/>
    <property type="molecule type" value="Genomic_DNA"/>
</dbReference>
<dbReference type="PIR" id="B64419">
    <property type="entry name" value="B64419"/>
</dbReference>
<dbReference type="SMR" id="Q58364"/>
<dbReference type="STRING" id="243232.MJ_0954"/>
<dbReference type="PaxDb" id="243232-MJ_0954"/>
<dbReference type="EnsemblBacteria" id="AAB98959">
    <property type="protein sequence ID" value="AAB98959"/>
    <property type="gene ID" value="MJ_0954"/>
</dbReference>
<dbReference type="KEGG" id="mja:MJ_0954"/>
<dbReference type="eggNOG" id="arCOG03420">
    <property type="taxonomic scope" value="Archaea"/>
</dbReference>
<dbReference type="HOGENOM" id="CLU_640322_0_0_2"/>
<dbReference type="InParanoid" id="Q58364"/>
<dbReference type="OrthoDB" id="148350at2157"/>
<dbReference type="PhylomeDB" id="Q58364"/>
<dbReference type="Proteomes" id="UP000000805">
    <property type="component" value="Chromosome"/>
</dbReference>
<dbReference type="InterPro" id="IPR022651">
    <property type="entry name" value="S_layer_C"/>
</dbReference>
<dbReference type="Pfam" id="PF05124">
    <property type="entry name" value="S_layer_C"/>
    <property type="match status" value="1"/>
</dbReference>
<name>Y954_METJA</name>
<protein>
    <recommendedName>
        <fullName>Uncharacterized protein MJ0954</fullName>
    </recommendedName>
</protein>
<feature type="signal peptide" evidence="1">
    <location>
        <begin position="1"/>
        <end position="29"/>
    </location>
</feature>
<feature type="chain" id="PRO_0000032622" description="Uncharacterized protein MJ0954">
    <location>
        <begin position="30"/>
        <end position="440"/>
    </location>
</feature>